<sequence>MTYSPGNPGYPQAQPAGSYGGVTPSFAHADEGASKLPMYLNIAVAVLGLAAYFASFGPMFTLSTELGGGDGAVSGDTGLPVGVALLAALLAGVALVPKAKSHVTVVAVLGVLGVFLMVSATFNKPSAYSTGWALWVVLAFIVFQAVAAVLALLVETGAITAPAPRPKFDPYGQYGRYGQYGQYGVQPGGYYGQQGAQQAAGLQSPGPQQSPQPPGYGSQYGGYSSSPSQSGSGYTAQPPAQPPAQSGSQQSHQGPSTPPTGFPSFSPPPPVSAGTGSQAGSAPVNYSNPSGGEQSSSPGGAPV</sequence>
<feature type="chain" id="PRO_0000427957" description="34 kDa antigenic protein homolog">
    <location>
        <begin position="1"/>
        <end position="303"/>
    </location>
</feature>
<feature type="transmembrane region" description="Helical" evidence="1">
    <location>
        <begin position="42"/>
        <end position="62"/>
    </location>
</feature>
<feature type="transmembrane region" description="Helical" evidence="1">
    <location>
        <begin position="77"/>
        <end position="97"/>
    </location>
</feature>
<feature type="transmembrane region" description="Helical" evidence="1">
    <location>
        <begin position="102"/>
        <end position="122"/>
    </location>
</feature>
<feature type="transmembrane region" description="Helical" evidence="1">
    <location>
        <begin position="134"/>
        <end position="154"/>
    </location>
</feature>
<feature type="region of interest" description="Disordered" evidence="2">
    <location>
        <begin position="194"/>
        <end position="303"/>
    </location>
</feature>
<feature type="compositionally biased region" description="Low complexity" evidence="2">
    <location>
        <begin position="194"/>
        <end position="207"/>
    </location>
</feature>
<feature type="compositionally biased region" description="Low complexity" evidence="2">
    <location>
        <begin position="215"/>
        <end position="255"/>
    </location>
</feature>
<feature type="compositionally biased region" description="Pro residues" evidence="2">
    <location>
        <begin position="256"/>
        <end position="271"/>
    </location>
</feature>
<feature type="compositionally biased region" description="Polar residues" evidence="2">
    <location>
        <begin position="274"/>
        <end position="286"/>
    </location>
</feature>
<feature type="compositionally biased region" description="Low complexity" evidence="2">
    <location>
        <begin position="287"/>
        <end position="303"/>
    </location>
</feature>
<organism>
    <name type="scientific">Mycobacterium tuberculosis (strain CDC 1551 / Oshkosh)</name>
    <dbReference type="NCBI Taxonomy" id="83331"/>
    <lineage>
        <taxon>Bacteria</taxon>
        <taxon>Bacillati</taxon>
        <taxon>Actinomycetota</taxon>
        <taxon>Actinomycetes</taxon>
        <taxon>Mycobacteriales</taxon>
        <taxon>Mycobacteriaceae</taxon>
        <taxon>Mycobacterium</taxon>
        <taxon>Mycobacterium tuberculosis complex</taxon>
    </lineage>
</organism>
<keyword id="KW-1003">Cell membrane</keyword>
<keyword id="KW-0472">Membrane</keyword>
<keyword id="KW-1185">Reference proteome</keyword>
<keyword id="KW-0812">Transmembrane</keyword>
<keyword id="KW-1133">Transmembrane helix</keyword>
<gene>
    <name type="ordered locus">MT0981</name>
</gene>
<proteinExistence type="predicted"/>
<comment type="subcellular location">
    <subcellularLocation>
        <location evidence="3">Cell membrane</location>
        <topology evidence="3">Multi-pass membrane protein</topology>
    </subcellularLocation>
</comment>
<comment type="similarity">
    <text evidence="3">To M.paratuberculosis 34 kDa antigenic protein.</text>
</comment>
<reference key="1">
    <citation type="journal article" date="2002" name="J. Bacteriol.">
        <title>Whole-genome comparison of Mycobacterium tuberculosis clinical and laboratory strains.</title>
        <authorList>
            <person name="Fleischmann R.D."/>
            <person name="Alland D."/>
            <person name="Eisen J.A."/>
            <person name="Carpenter L."/>
            <person name="White O."/>
            <person name="Peterson J.D."/>
            <person name="DeBoy R.T."/>
            <person name="Dodson R.J."/>
            <person name="Gwinn M.L."/>
            <person name="Haft D.H."/>
            <person name="Hickey E.K."/>
            <person name="Kolonay J.F."/>
            <person name="Nelson W.C."/>
            <person name="Umayam L.A."/>
            <person name="Ermolaeva M.D."/>
            <person name="Salzberg S.L."/>
            <person name="Delcher A."/>
            <person name="Utterback T.R."/>
            <person name="Weidman J.F."/>
            <person name="Khouri H.M."/>
            <person name="Gill J."/>
            <person name="Mikula A."/>
            <person name="Bishai W."/>
            <person name="Jacobs W.R. Jr."/>
            <person name="Venter J.C."/>
            <person name="Fraser C.M."/>
        </authorList>
    </citation>
    <scope>NUCLEOTIDE SEQUENCE [LARGE SCALE GENOMIC DNA]</scope>
    <source>
        <strain>CDC 1551 / Oshkosh</strain>
    </source>
</reference>
<accession>P9WIR8</accession>
<accession>L0T875</accession>
<accession>P65637</accession>
<accession>P71556</accession>
<name>34KD_MYCTO</name>
<evidence type="ECO:0000255" key="1"/>
<evidence type="ECO:0000256" key="2">
    <source>
        <dbReference type="SAM" id="MobiDB-lite"/>
    </source>
</evidence>
<evidence type="ECO:0000305" key="3"/>
<dbReference type="EMBL" id="AE000516">
    <property type="protein sequence ID" value="AAK45229.1"/>
    <property type="molecule type" value="Genomic_DNA"/>
</dbReference>
<dbReference type="PIR" id="H70716">
    <property type="entry name" value="H70716"/>
</dbReference>
<dbReference type="RefSeq" id="WP_003404875.1">
    <property type="nucleotide sequence ID" value="NZ_KK341227.1"/>
</dbReference>
<dbReference type="RefSeq" id="WP_010924324.1">
    <property type="nucleotide sequence ID" value="NC_002755.2"/>
</dbReference>
<dbReference type="KEGG" id="mtc:MT0981"/>
<dbReference type="PATRIC" id="fig|83331.31.peg.1053"/>
<dbReference type="HOGENOM" id="CLU_086639_0_0_11"/>
<dbReference type="Proteomes" id="UP000001020">
    <property type="component" value="Chromosome"/>
</dbReference>
<dbReference type="GO" id="GO:0005886">
    <property type="term" value="C:plasma membrane"/>
    <property type="evidence" value="ECO:0007669"/>
    <property type="project" value="UniProtKB-SubCell"/>
</dbReference>
<dbReference type="InterPro" id="IPR035166">
    <property type="entry name" value="DUF5336"/>
</dbReference>
<dbReference type="Pfam" id="PF17270">
    <property type="entry name" value="DUF5336"/>
    <property type="match status" value="1"/>
</dbReference>
<protein>
    <recommendedName>
        <fullName>34 kDa antigenic protein homolog</fullName>
    </recommendedName>
</protein>